<organism>
    <name type="scientific">Pseudomonas fluorescens (strain ATCC BAA-477 / NRRL B-23932 / Pf-5)</name>
    <dbReference type="NCBI Taxonomy" id="220664"/>
    <lineage>
        <taxon>Bacteria</taxon>
        <taxon>Pseudomonadati</taxon>
        <taxon>Pseudomonadota</taxon>
        <taxon>Gammaproteobacteria</taxon>
        <taxon>Pseudomonadales</taxon>
        <taxon>Pseudomonadaceae</taxon>
        <taxon>Pseudomonas</taxon>
    </lineage>
</organism>
<accession>Q4KJ62</accession>
<gene>
    <name evidence="1" type="primary">rpsF</name>
    <name type="ordered locus">PFL_0579</name>
</gene>
<keyword id="KW-0687">Ribonucleoprotein</keyword>
<keyword id="KW-0689">Ribosomal protein</keyword>
<keyword id="KW-0694">RNA-binding</keyword>
<keyword id="KW-0699">rRNA-binding</keyword>
<reference key="1">
    <citation type="journal article" date="2005" name="Nat. Biotechnol.">
        <title>Complete genome sequence of the plant commensal Pseudomonas fluorescens Pf-5.</title>
        <authorList>
            <person name="Paulsen I.T."/>
            <person name="Press C.M."/>
            <person name="Ravel J."/>
            <person name="Kobayashi D.Y."/>
            <person name="Myers G.S.A."/>
            <person name="Mavrodi D.V."/>
            <person name="DeBoy R.T."/>
            <person name="Seshadri R."/>
            <person name="Ren Q."/>
            <person name="Madupu R."/>
            <person name="Dodson R.J."/>
            <person name="Durkin A.S."/>
            <person name="Brinkac L.M."/>
            <person name="Daugherty S.C."/>
            <person name="Sullivan S.A."/>
            <person name="Rosovitz M.J."/>
            <person name="Gwinn M.L."/>
            <person name="Zhou L."/>
            <person name="Schneider D.J."/>
            <person name="Cartinhour S.W."/>
            <person name="Nelson W.C."/>
            <person name="Weidman J."/>
            <person name="Watkins K."/>
            <person name="Tran K."/>
            <person name="Khouri H."/>
            <person name="Pierson E.A."/>
            <person name="Pierson L.S. III"/>
            <person name="Thomashow L.S."/>
            <person name="Loper J.E."/>
        </authorList>
    </citation>
    <scope>NUCLEOTIDE SEQUENCE [LARGE SCALE GENOMIC DNA]</scope>
    <source>
        <strain>ATCC BAA-477 / NRRL B-23932 / Pf-5</strain>
    </source>
</reference>
<protein>
    <recommendedName>
        <fullName evidence="1">Small ribosomal subunit protein bS6</fullName>
    </recommendedName>
    <alternativeName>
        <fullName evidence="3">30S ribosomal protein S6</fullName>
    </alternativeName>
</protein>
<proteinExistence type="inferred from homology"/>
<evidence type="ECO:0000255" key="1">
    <source>
        <dbReference type="HAMAP-Rule" id="MF_00360"/>
    </source>
</evidence>
<evidence type="ECO:0000256" key="2">
    <source>
        <dbReference type="SAM" id="MobiDB-lite"/>
    </source>
</evidence>
<evidence type="ECO:0000305" key="3"/>
<dbReference type="EMBL" id="CP000076">
    <property type="protein sequence ID" value="AAY95986.1"/>
    <property type="molecule type" value="Genomic_DNA"/>
</dbReference>
<dbReference type="RefSeq" id="WP_011058949.1">
    <property type="nucleotide sequence ID" value="NC_004129.6"/>
</dbReference>
<dbReference type="SMR" id="Q4KJ62"/>
<dbReference type="STRING" id="220664.PFL_0579"/>
<dbReference type="GeneID" id="57473569"/>
<dbReference type="KEGG" id="pfl:PFL_0579"/>
<dbReference type="eggNOG" id="COG0360">
    <property type="taxonomic scope" value="Bacteria"/>
</dbReference>
<dbReference type="HOGENOM" id="CLU_113441_6_1_6"/>
<dbReference type="Proteomes" id="UP000008540">
    <property type="component" value="Chromosome"/>
</dbReference>
<dbReference type="GO" id="GO:0022627">
    <property type="term" value="C:cytosolic small ribosomal subunit"/>
    <property type="evidence" value="ECO:0007669"/>
    <property type="project" value="TreeGrafter"/>
</dbReference>
<dbReference type="GO" id="GO:0070181">
    <property type="term" value="F:small ribosomal subunit rRNA binding"/>
    <property type="evidence" value="ECO:0007669"/>
    <property type="project" value="TreeGrafter"/>
</dbReference>
<dbReference type="GO" id="GO:0003735">
    <property type="term" value="F:structural constituent of ribosome"/>
    <property type="evidence" value="ECO:0007669"/>
    <property type="project" value="InterPro"/>
</dbReference>
<dbReference type="GO" id="GO:0006412">
    <property type="term" value="P:translation"/>
    <property type="evidence" value="ECO:0007669"/>
    <property type="project" value="UniProtKB-UniRule"/>
</dbReference>
<dbReference type="CDD" id="cd00473">
    <property type="entry name" value="bS6"/>
    <property type="match status" value="1"/>
</dbReference>
<dbReference type="FunFam" id="3.30.70.60:FF:000003">
    <property type="entry name" value="30S ribosomal protein S6"/>
    <property type="match status" value="1"/>
</dbReference>
<dbReference type="Gene3D" id="3.30.70.60">
    <property type="match status" value="1"/>
</dbReference>
<dbReference type="HAMAP" id="MF_00360">
    <property type="entry name" value="Ribosomal_bS6"/>
    <property type="match status" value="1"/>
</dbReference>
<dbReference type="InterPro" id="IPR000529">
    <property type="entry name" value="Ribosomal_bS6"/>
</dbReference>
<dbReference type="InterPro" id="IPR020815">
    <property type="entry name" value="Ribosomal_bS6_CS"/>
</dbReference>
<dbReference type="InterPro" id="IPR035980">
    <property type="entry name" value="Ribosomal_bS6_sf"/>
</dbReference>
<dbReference type="InterPro" id="IPR020814">
    <property type="entry name" value="Ribosomal_S6_plastid/chlpt"/>
</dbReference>
<dbReference type="InterPro" id="IPR014717">
    <property type="entry name" value="Transl_elong_EF1B/ribsomal_bS6"/>
</dbReference>
<dbReference type="NCBIfam" id="TIGR00166">
    <property type="entry name" value="S6"/>
    <property type="match status" value="1"/>
</dbReference>
<dbReference type="PANTHER" id="PTHR21011">
    <property type="entry name" value="MITOCHONDRIAL 28S RIBOSOMAL PROTEIN S6"/>
    <property type="match status" value="1"/>
</dbReference>
<dbReference type="PANTHER" id="PTHR21011:SF1">
    <property type="entry name" value="SMALL RIBOSOMAL SUBUNIT PROTEIN BS6M"/>
    <property type="match status" value="1"/>
</dbReference>
<dbReference type="Pfam" id="PF01250">
    <property type="entry name" value="Ribosomal_S6"/>
    <property type="match status" value="1"/>
</dbReference>
<dbReference type="SUPFAM" id="SSF54995">
    <property type="entry name" value="Ribosomal protein S6"/>
    <property type="match status" value="1"/>
</dbReference>
<dbReference type="PROSITE" id="PS01048">
    <property type="entry name" value="RIBOSOMAL_S6"/>
    <property type="match status" value="1"/>
</dbReference>
<feature type="chain" id="PRO_0000229565" description="Small ribosomal subunit protein bS6">
    <location>
        <begin position="1"/>
        <end position="141"/>
    </location>
</feature>
<feature type="region of interest" description="Disordered" evidence="2">
    <location>
        <begin position="97"/>
        <end position="141"/>
    </location>
</feature>
<feature type="compositionally biased region" description="Basic and acidic residues" evidence="2">
    <location>
        <begin position="103"/>
        <end position="124"/>
    </location>
</feature>
<feature type="compositionally biased region" description="Acidic residues" evidence="2">
    <location>
        <begin position="125"/>
        <end position="141"/>
    </location>
</feature>
<comment type="function">
    <text evidence="1">Binds together with bS18 to 16S ribosomal RNA.</text>
</comment>
<comment type="similarity">
    <text evidence="1">Belongs to the bacterial ribosomal protein bS6 family.</text>
</comment>
<sequence>MRHYEIIFLVHPDQSEQVGGMVERYTKLIEEDGGKIHRLEDWGRRQLAYAINNVHKAHYVMLNVECTGKALAELEDNFRYNDAVIRNLVIRREEAITGQSEMLKAEENRSERRERRDRPEHADSADGDDSDNSDASDNADE</sequence>
<name>RS6_PSEF5</name>